<accession>A0A1B0GVS7</accession>
<accession>A0A0U1T9V0</accession>
<accession>A0A0U1WUY1</accession>
<keyword id="KW-0025">Alternative splicing</keyword>
<keyword id="KW-1185">Reference proteome</keyword>
<evidence type="ECO:0000255" key="1"/>
<evidence type="ECO:0000305" key="2"/>
<evidence type="ECO:0000312" key="3">
    <source>
        <dbReference type="HGNC" id="HGNC:53442"/>
    </source>
</evidence>
<dbReference type="EMBL" id="KC470081">
    <property type="protein sequence ID" value="AHA59118.1"/>
    <property type="molecule type" value="mRNA"/>
</dbReference>
<dbReference type="EMBL" id="KC470082">
    <property type="protein sequence ID" value="AHA59119.1"/>
    <property type="molecule type" value="mRNA"/>
</dbReference>
<dbReference type="EMBL" id="AC134025">
    <property type="status" value="NOT_ANNOTATED_CDS"/>
    <property type="molecule type" value="Genomic_DNA"/>
</dbReference>
<dbReference type="CCDS" id="CCDS93309.1">
    <molecule id="A0A1B0GVS7-1"/>
</dbReference>
<dbReference type="RefSeq" id="NP_001351605.1">
    <molecule id="A0A1B0GVS7-2"/>
    <property type="nucleotide sequence ID" value="NM_001364676.1"/>
</dbReference>
<dbReference type="RefSeq" id="NP_001351606.1">
    <molecule id="A0A1B0GVS7-1"/>
    <property type="nucleotide sequence ID" value="NM_001364677.1"/>
</dbReference>
<dbReference type="RefSeq" id="XP_016863108.1">
    <property type="nucleotide sequence ID" value="XM_017007619.1"/>
</dbReference>
<dbReference type="SMR" id="A0A1B0GVS7"/>
<dbReference type="STRING" id="9606.ENSP00000490638"/>
<dbReference type="BioMuta" id="MDFIC2"/>
<dbReference type="Ensembl" id="ENST00000567252.2">
    <molecule id="A0A1B0GVS7-1"/>
    <property type="protein sequence ID" value="ENSP00000490638.1"/>
    <property type="gene ID" value="ENSG00000242120.4"/>
</dbReference>
<dbReference type="GeneID" id="107986096"/>
<dbReference type="MANE-Select" id="ENST00000567252.2">
    <property type="protein sequence ID" value="ENSP00000490638.1"/>
    <property type="RefSeq nucleotide sequence ID" value="NM_001364677.1"/>
    <property type="RefSeq protein sequence ID" value="NP_001351606.1"/>
</dbReference>
<dbReference type="AGR" id="HGNC:53442"/>
<dbReference type="GeneCards" id="MDFIC2"/>
<dbReference type="HGNC" id="HGNC:53442">
    <property type="gene designation" value="MDFIC2"/>
</dbReference>
<dbReference type="HPA" id="ENSG00000242120">
    <property type="expression patterns" value="Not detected"/>
</dbReference>
<dbReference type="neXtProt" id="NX_A0A1B0GVS7"/>
<dbReference type="OpenTargets" id="ENSG00000242120"/>
<dbReference type="VEuPathDB" id="HostDB:ENSG00000242120"/>
<dbReference type="GeneTree" id="ENSGT00730000111641"/>
<dbReference type="InParanoid" id="A0A1B0GVS7"/>
<dbReference type="OMA" id="EKCRTQF"/>
<dbReference type="OrthoDB" id="8767764at2759"/>
<dbReference type="PAN-GO" id="A0A1B0GVS7">
    <property type="GO annotations" value="0 GO annotations based on evolutionary models"/>
</dbReference>
<dbReference type="BioGRID-ORCS" id="107986096">
    <property type="hits" value="0 hits in 4 CRISPR screens"/>
</dbReference>
<dbReference type="ChiTaRS" id="MDFIC2">
    <property type="organism name" value="human"/>
</dbReference>
<dbReference type="Pharos" id="A0A1B0GVS7">
    <property type="development level" value="Tdark"/>
</dbReference>
<dbReference type="PRO" id="PR:A0A1B0GVS7"/>
<dbReference type="Proteomes" id="UP000005640">
    <property type="component" value="Chromosome 3"/>
</dbReference>
<dbReference type="RNAct" id="A0A1B0GVS7">
    <property type="molecule type" value="protein"/>
</dbReference>
<dbReference type="Bgee" id="ENSG00000242120">
    <property type="expression patterns" value="Expressed in caudate nucleus and 6 other cell types or tissues"/>
</dbReference>
<dbReference type="GO" id="GO:0005634">
    <property type="term" value="C:nucleus"/>
    <property type="evidence" value="ECO:0000318"/>
    <property type="project" value="GO_Central"/>
</dbReference>
<dbReference type="GO" id="GO:0045892">
    <property type="term" value="P:negative regulation of DNA-templated transcription"/>
    <property type="evidence" value="ECO:0000318"/>
    <property type="project" value="GO_Central"/>
</dbReference>
<dbReference type="GO" id="GO:0046328">
    <property type="term" value="P:regulation of JNK cascade"/>
    <property type="evidence" value="ECO:0000318"/>
    <property type="project" value="GO_Central"/>
</dbReference>
<dbReference type="GO" id="GO:0030111">
    <property type="term" value="P:regulation of Wnt signaling pathway"/>
    <property type="evidence" value="ECO:0000318"/>
    <property type="project" value="GO_Central"/>
</dbReference>
<dbReference type="InterPro" id="IPR026134">
    <property type="entry name" value="MDFI/MDFIC"/>
</dbReference>
<dbReference type="PANTHER" id="PTHR15304">
    <property type="entry name" value="MYOD FAMILY INHIBITOR"/>
    <property type="match status" value="1"/>
</dbReference>
<dbReference type="PANTHER" id="PTHR15304:SF2">
    <property type="entry name" value="MYOD FAMILY INHIBITOR DOMAIN-CONTAINING PROTEIN 2"/>
    <property type="match status" value="1"/>
</dbReference>
<dbReference type="Pfam" id="PF15316">
    <property type="entry name" value="MDFI"/>
    <property type="match status" value="1"/>
</dbReference>
<gene>
    <name evidence="3" type="primary">MDFIC2</name>
</gene>
<reference key="1">
    <citation type="submission" date="2013-01" db="EMBL/GenBank/DDBJ databases">
        <title>A novel human gene enriched in adult dorsal root ganglia.</title>
        <authorList>
            <person name="Habib A.M."/>
            <person name="Torres J.M."/>
            <person name="Werdehausen R."/>
            <person name="Wood J.N."/>
            <person name="Cox J.J."/>
        </authorList>
    </citation>
    <scope>NUCLEOTIDE SEQUENCE [MRNA] (ISOFORM 2)</scope>
    <source>
        <tissue>Spinal ganglion</tissue>
    </source>
</reference>
<reference key="2">
    <citation type="journal article" date="2006" name="Nature">
        <title>The DNA sequence, annotation and analysis of human chromosome 3.</title>
        <authorList>
            <person name="Muzny D.M."/>
            <person name="Scherer S.E."/>
            <person name="Kaul R."/>
            <person name="Wang J."/>
            <person name="Yu J."/>
            <person name="Sudbrak R."/>
            <person name="Buhay C.J."/>
            <person name="Chen R."/>
            <person name="Cree A."/>
            <person name="Ding Y."/>
            <person name="Dugan-Rocha S."/>
            <person name="Gill R."/>
            <person name="Gunaratne P."/>
            <person name="Harris R.A."/>
            <person name="Hawes A.C."/>
            <person name="Hernandez J."/>
            <person name="Hodgson A.V."/>
            <person name="Hume J."/>
            <person name="Jackson A."/>
            <person name="Khan Z.M."/>
            <person name="Kovar-Smith C."/>
            <person name="Lewis L.R."/>
            <person name="Lozado R.J."/>
            <person name="Metzker M.L."/>
            <person name="Milosavljevic A."/>
            <person name="Miner G.R."/>
            <person name="Morgan M.B."/>
            <person name="Nazareth L.V."/>
            <person name="Scott G."/>
            <person name="Sodergren E."/>
            <person name="Song X.-Z."/>
            <person name="Steffen D."/>
            <person name="Wei S."/>
            <person name="Wheeler D.A."/>
            <person name="Wright M.W."/>
            <person name="Worley K.C."/>
            <person name="Yuan Y."/>
            <person name="Zhang Z."/>
            <person name="Adams C.Q."/>
            <person name="Ansari-Lari M.A."/>
            <person name="Ayele M."/>
            <person name="Brown M.J."/>
            <person name="Chen G."/>
            <person name="Chen Z."/>
            <person name="Clendenning J."/>
            <person name="Clerc-Blankenburg K.P."/>
            <person name="Chen R."/>
            <person name="Chen Z."/>
            <person name="Davis C."/>
            <person name="Delgado O."/>
            <person name="Dinh H.H."/>
            <person name="Dong W."/>
            <person name="Draper H."/>
            <person name="Ernst S."/>
            <person name="Fu G."/>
            <person name="Gonzalez-Garay M.L."/>
            <person name="Garcia D.K."/>
            <person name="Gillett W."/>
            <person name="Gu J."/>
            <person name="Hao B."/>
            <person name="Haugen E."/>
            <person name="Havlak P."/>
            <person name="He X."/>
            <person name="Hennig S."/>
            <person name="Hu S."/>
            <person name="Huang W."/>
            <person name="Jackson L.R."/>
            <person name="Jacob L.S."/>
            <person name="Kelly S.H."/>
            <person name="Kube M."/>
            <person name="Levy R."/>
            <person name="Li Z."/>
            <person name="Liu B."/>
            <person name="Liu J."/>
            <person name="Liu W."/>
            <person name="Lu J."/>
            <person name="Maheshwari M."/>
            <person name="Nguyen B.-V."/>
            <person name="Okwuonu G.O."/>
            <person name="Palmeiri A."/>
            <person name="Pasternak S."/>
            <person name="Perez L.M."/>
            <person name="Phelps K.A."/>
            <person name="Plopper F.J."/>
            <person name="Qiang B."/>
            <person name="Raymond C."/>
            <person name="Rodriguez R."/>
            <person name="Saenphimmachak C."/>
            <person name="Santibanez J."/>
            <person name="Shen H."/>
            <person name="Shen Y."/>
            <person name="Subramanian S."/>
            <person name="Tabor P.E."/>
            <person name="Verduzco D."/>
            <person name="Waldron L."/>
            <person name="Wang J."/>
            <person name="Wang J."/>
            <person name="Wang Q."/>
            <person name="Williams G.A."/>
            <person name="Wong G.K.-S."/>
            <person name="Yao Z."/>
            <person name="Zhang J."/>
            <person name="Zhang X."/>
            <person name="Zhao G."/>
            <person name="Zhou J."/>
            <person name="Zhou Y."/>
            <person name="Nelson D."/>
            <person name="Lehrach H."/>
            <person name="Reinhardt R."/>
            <person name="Naylor S.L."/>
            <person name="Yang H."/>
            <person name="Olson M."/>
            <person name="Weinstock G."/>
            <person name="Gibbs R.A."/>
        </authorList>
    </citation>
    <scope>NUCLEOTIDE SEQUENCE [LARGE SCALE GENOMIC DNA]</scope>
</reference>
<feature type="chain" id="PRO_0000441412" description="MyoD family inhibitor domain-containing protein 2">
    <location>
        <begin position="1"/>
        <end position="189"/>
    </location>
</feature>
<feature type="domain" description="MDFI">
    <location>
        <begin position="28"/>
        <end position="188"/>
    </location>
</feature>
<feature type="splice variant" id="VSP_059068" description="In isoform 2.">
    <original>E</original>
    <variation>EGLSTSILNPLGDP</variation>
    <location>
        <position position="29"/>
    </location>
</feature>
<feature type="sequence conflict" description="In Ref. 1; AHA59118." evidence="2" ref="1">
    <original>R</original>
    <variation>H</variation>
    <location>
        <position position="141"/>
    </location>
</feature>
<sequence>MSETELEKIKVRTAEHLENDKNNISWLKEDTQLTNAKHADEKPINAIVINSVSDFNITDGPAKENPNEKKLSESSTSLSSLEECQTTFSYLQTDTSVHHRDTDEECASLILACLFCQFWDCLLMLPGTCETVCTKMCCPSRRYHHTSDENHSRNDCSCNCDMDCSLFESCHETSECLELAMEISEICYR</sequence>
<protein>
    <recommendedName>
        <fullName evidence="2">MyoD family inhibitor domain-containing protein 2</fullName>
    </recommendedName>
</protein>
<proteinExistence type="evidence at transcript level"/>
<comment type="alternative products">
    <event type="alternative splicing"/>
    <isoform>
        <id>A0A1B0GVS7-1</id>
        <name>1</name>
        <sequence type="displayed"/>
    </isoform>
    <isoform>
        <id>A0A1B0GVS7-2</id>
        <name>2</name>
        <sequence type="described" ref="VSP_059068"/>
    </isoform>
</comment>
<comment type="similarity">
    <text evidence="1">Belongs to the MDFI family.</text>
</comment>
<name>MDFI2_HUMAN</name>
<organism>
    <name type="scientific">Homo sapiens</name>
    <name type="common">Human</name>
    <dbReference type="NCBI Taxonomy" id="9606"/>
    <lineage>
        <taxon>Eukaryota</taxon>
        <taxon>Metazoa</taxon>
        <taxon>Chordata</taxon>
        <taxon>Craniata</taxon>
        <taxon>Vertebrata</taxon>
        <taxon>Euteleostomi</taxon>
        <taxon>Mammalia</taxon>
        <taxon>Eutheria</taxon>
        <taxon>Euarchontoglires</taxon>
        <taxon>Primates</taxon>
        <taxon>Haplorrhini</taxon>
        <taxon>Catarrhini</taxon>
        <taxon>Hominidae</taxon>
        <taxon>Homo</taxon>
    </lineage>
</organism>